<dbReference type="EMBL" id="L35518">
    <property type="protein sequence ID" value="AAA74618.1"/>
    <property type="molecule type" value="Genomic_DNA"/>
</dbReference>
<dbReference type="GO" id="GO:0000786">
    <property type="term" value="C:nucleosome"/>
    <property type="evidence" value="ECO:0007669"/>
    <property type="project" value="UniProtKB-KW"/>
</dbReference>
<dbReference type="GO" id="GO:0005634">
    <property type="term" value="C:nucleus"/>
    <property type="evidence" value="ECO:0007669"/>
    <property type="project" value="UniProtKB-SubCell"/>
</dbReference>
<dbReference type="GO" id="GO:0003677">
    <property type="term" value="F:DNA binding"/>
    <property type="evidence" value="ECO:0007669"/>
    <property type="project" value="UniProtKB-KW"/>
</dbReference>
<dbReference type="GO" id="GO:0030154">
    <property type="term" value="P:cell differentiation"/>
    <property type="evidence" value="ECO:0007669"/>
    <property type="project" value="UniProtKB-KW"/>
</dbReference>
<dbReference type="GO" id="GO:0030261">
    <property type="term" value="P:chromosome condensation"/>
    <property type="evidence" value="ECO:0007669"/>
    <property type="project" value="UniProtKB-KW"/>
</dbReference>
<dbReference type="GO" id="GO:0007283">
    <property type="term" value="P:spermatogenesis"/>
    <property type="evidence" value="ECO:0007669"/>
    <property type="project" value="UniProtKB-KW"/>
</dbReference>
<keyword id="KW-0158">Chromosome</keyword>
<keyword id="KW-0217">Developmental protein</keyword>
<keyword id="KW-0221">Differentiation</keyword>
<keyword id="KW-0226">DNA condensation</keyword>
<keyword id="KW-0238">DNA-binding</keyword>
<keyword id="KW-0544">Nucleosome core</keyword>
<keyword id="KW-0539">Nucleus</keyword>
<keyword id="KW-0744">Spermatogenesis</keyword>
<gene>
    <name type="primary">PRM1</name>
</gene>
<organism>
    <name type="scientific">Isoodon macrourus</name>
    <name type="common">Short-nosed bandicoot</name>
    <name type="synonym">Northern brown bandicoot</name>
    <dbReference type="NCBI Taxonomy" id="37698"/>
    <lineage>
        <taxon>Eukaryota</taxon>
        <taxon>Metazoa</taxon>
        <taxon>Chordata</taxon>
        <taxon>Craniata</taxon>
        <taxon>Vertebrata</taxon>
        <taxon>Euteleostomi</taxon>
        <taxon>Mammalia</taxon>
        <taxon>Metatheria</taxon>
        <taxon>Peramelemorphia</taxon>
        <taxon>Peramelidae</taxon>
        <taxon>Isoodon</taxon>
    </lineage>
</organism>
<proteinExistence type="evidence at transcript level"/>
<name>HSP1_ISOMA</name>
<comment type="function">
    <text>Protamines substitute for histones in the chromatin of sperm during the haploid phase of spermatogenesis. They compact sperm DNA into a highly condensed, stable and inactive complex.</text>
</comment>
<comment type="subcellular location">
    <subcellularLocation>
        <location>Nucleus</location>
    </subcellularLocation>
    <subcellularLocation>
        <location>Chromosome</location>
    </subcellularLocation>
</comment>
<comment type="tissue specificity">
    <text>Testis.</text>
</comment>
<comment type="similarity">
    <text evidence="2">Belongs to the protamine P1 family.</text>
</comment>
<protein>
    <recommendedName>
        <fullName>Sperm protamine P1</fullName>
    </recommendedName>
</protein>
<feature type="chain" id="PRO_0000191485" description="Sperm protamine P1">
    <location>
        <begin position="1"/>
        <end position="67"/>
    </location>
</feature>
<feature type="region of interest" description="Disordered" evidence="1">
    <location>
        <begin position="1"/>
        <end position="67"/>
    </location>
</feature>
<feature type="compositionally biased region" description="Basic residues" evidence="1">
    <location>
        <begin position="7"/>
        <end position="25"/>
    </location>
</feature>
<feature type="compositionally biased region" description="Basic residues" evidence="1">
    <location>
        <begin position="34"/>
        <end position="67"/>
    </location>
</feature>
<accession>P42136</accession>
<evidence type="ECO:0000256" key="1">
    <source>
        <dbReference type="SAM" id="MobiDB-lite"/>
    </source>
</evidence>
<evidence type="ECO:0000305" key="2"/>
<sequence>MASYRNSRSRSRSRFRRRRGRRSRVRGRDARQGRSSRRRRRGKGRAHSGKKGRRSGSRRRKRNNENK</sequence>
<reference key="1">
    <citation type="journal article" date="1995" name="Proc. R. Soc. B">
        <title>Molecular phylogeny and evolution of marsupial protamine P1 genes.</title>
        <authorList>
            <person name="Retief J.D."/>
            <person name="Krajewski C."/>
            <person name="Westerman M."/>
            <person name="Winkfein R.J."/>
            <person name="Dixon G.H."/>
        </authorList>
    </citation>
    <scope>NUCLEOTIDE SEQUENCE [GENOMIC DNA]</scope>
    <source>
        <tissue>Sperm</tissue>
    </source>
</reference>